<sequence>MASGAPPLTQKTPSHARRKERRRPWAAAFGNHAALAPRALLASEQDRGTERHVVRRALLLIACGVVAVRRTHLEARDAYFGAHACAHLSICVHGDSRKQGEEANRV</sequence>
<protein>
    <recommendedName>
        <fullName>Uncharacterized protein TP_0857</fullName>
    </recommendedName>
</protein>
<name>Y857_TREPA</name>
<reference key="1">
    <citation type="journal article" date="1998" name="Science">
        <title>Complete genome sequence of Treponema pallidum, the syphilis spirochete.</title>
        <authorList>
            <person name="Fraser C.M."/>
            <person name="Norris S.J."/>
            <person name="Weinstock G.M."/>
            <person name="White O."/>
            <person name="Sutton G.G."/>
            <person name="Dodson R.J."/>
            <person name="Gwinn M.L."/>
            <person name="Hickey E.K."/>
            <person name="Clayton R.A."/>
            <person name="Ketchum K.A."/>
            <person name="Sodergren E."/>
            <person name="Hardham J.M."/>
            <person name="McLeod M.P."/>
            <person name="Salzberg S.L."/>
            <person name="Peterson J.D."/>
            <person name="Khalak H.G."/>
            <person name="Richardson D.L."/>
            <person name="Howell J.K."/>
            <person name="Chidambaram M."/>
            <person name="Utterback T.R."/>
            <person name="McDonald L.A."/>
            <person name="Artiach P."/>
            <person name="Bowman C."/>
            <person name="Cotton M.D."/>
            <person name="Fujii C."/>
            <person name="Garland S.A."/>
            <person name="Hatch B."/>
            <person name="Horst K."/>
            <person name="Roberts K.M."/>
            <person name="Sandusky M."/>
            <person name="Weidman J.F."/>
            <person name="Smith H.O."/>
            <person name="Venter J.C."/>
        </authorList>
    </citation>
    <scope>NUCLEOTIDE SEQUENCE [LARGE SCALE GENOMIC DNA]</scope>
    <source>
        <strain>Nichols</strain>
    </source>
</reference>
<feature type="chain" id="PRO_0000202340" description="Uncharacterized protein TP_0857">
    <location>
        <begin position="1"/>
        <end position="106"/>
    </location>
</feature>
<feature type="region of interest" description="Disordered" evidence="1">
    <location>
        <begin position="1"/>
        <end position="23"/>
    </location>
</feature>
<feature type="compositionally biased region" description="Basic residues" evidence="1">
    <location>
        <begin position="14"/>
        <end position="23"/>
    </location>
</feature>
<evidence type="ECO:0000256" key="1">
    <source>
        <dbReference type="SAM" id="MobiDB-lite"/>
    </source>
</evidence>
<accession>O83829</accession>
<keyword id="KW-1185">Reference proteome</keyword>
<organism>
    <name type="scientific">Treponema pallidum (strain Nichols)</name>
    <dbReference type="NCBI Taxonomy" id="243276"/>
    <lineage>
        <taxon>Bacteria</taxon>
        <taxon>Pseudomonadati</taxon>
        <taxon>Spirochaetota</taxon>
        <taxon>Spirochaetia</taxon>
        <taxon>Spirochaetales</taxon>
        <taxon>Treponemataceae</taxon>
        <taxon>Treponema</taxon>
    </lineage>
</organism>
<dbReference type="EMBL" id="AE000520">
    <property type="protein sequence ID" value="AAC65830.1"/>
    <property type="molecule type" value="Genomic_DNA"/>
</dbReference>
<dbReference type="PIR" id="A71272">
    <property type="entry name" value="A71272"/>
</dbReference>
<dbReference type="STRING" id="243276.TP_0857"/>
<dbReference type="EnsemblBacteria" id="AAC65830">
    <property type="protein sequence ID" value="AAC65830"/>
    <property type="gene ID" value="TP_0857"/>
</dbReference>
<dbReference type="KEGG" id="tpa:TP_0857"/>
<dbReference type="KEGG" id="tpw:TPANIC_0857"/>
<dbReference type="HOGENOM" id="CLU_2222068_0_0_12"/>
<dbReference type="Proteomes" id="UP000000811">
    <property type="component" value="Chromosome"/>
</dbReference>
<gene>
    <name type="ordered locus">TP_0857</name>
</gene>
<proteinExistence type="predicted"/>